<evidence type="ECO:0000255" key="1">
    <source>
        <dbReference type="PROSITE-ProRule" id="PRU01188"/>
    </source>
</evidence>
<evidence type="ECO:0000256" key="2">
    <source>
        <dbReference type="SAM" id="MobiDB-lite"/>
    </source>
</evidence>
<evidence type="ECO:0000305" key="3"/>
<accession>Q8R2V2</accession>
<keyword id="KW-0175">Coiled coil</keyword>
<keyword id="KW-0403">Intermediate filament</keyword>
<keyword id="KW-1185">Reference proteome</keyword>
<comment type="similarity">
    <text evidence="1">Belongs to the intermediate filament family.</text>
</comment>
<comment type="sequence caution" evidence="3">
    <conflict type="erroneous initiation">
        <sequence resource="EMBL-CDS" id="AAH27170"/>
    </conflict>
    <text>Truncated N-terminus.</text>
</comment>
<comment type="sequence caution" evidence="3">
    <conflict type="miscellaneous discrepancy">
        <sequence resource="EMBL-CDS" id="AAH27170"/>
    </conflict>
    <text>Contaminating sequence. Sequence of unknown origin in the N-terminal part.</text>
</comment>
<feature type="chain" id="PRO_0000326186" description="Intermediate filament family orphan 2">
    <location>
        <begin position="1"/>
        <end position="512"/>
    </location>
</feature>
<feature type="domain" description="IF rod" evidence="1">
    <location>
        <begin position="50"/>
        <end position="479"/>
    </location>
</feature>
<feature type="region of interest" description="Disordered" evidence="2">
    <location>
        <begin position="473"/>
        <end position="512"/>
    </location>
</feature>
<feature type="compositionally biased region" description="Low complexity" evidence="2">
    <location>
        <begin position="480"/>
        <end position="492"/>
    </location>
</feature>
<feature type="compositionally biased region" description="Acidic residues" evidence="2">
    <location>
        <begin position="496"/>
        <end position="512"/>
    </location>
</feature>
<organism>
    <name type="scientific">Mus musculus</name>
    <name type="common">Mouse</name>
    <dbReference type="NCBI Taxonomy" id="10090"/>
    <lineage>
        <taxon>Eukaryota</taxon>
        <taxon>Metazoa</taxon>
        <taxon>Chordata</taxon>
        <taxon>Craniata</taxon>
        <taxon>Vertebrata</taxon>
        <taxon>Euteleostomi</taxon>
        <taxon>Mammalia</taxon>
        <taxon>Eutheria</taxon>
        <taxon>Euarchontoglires</taxon>
        <taxon>Glires</taxon>
        <taxon>Rodentia</taxon>
        <taxon>Myomorpha</taxon>
        <taxon>Muroidea</taxon>
        <taxon>Muridae</taxon>
        <taxon>Murinae</taxon>
        <taxon>Mus</taxon>
        <taxon>Mus</taxon>
    </lineage>
</organism>
<protein>
    <recommendedName>
        <fullName>Intermediate filament family orphan 2</fullName>
    </recommendedName>
</protein>
<gene>
    <name type="primary">Iffo2</name>
</gene>
<dbReference type="EMBL" id="BC027170">
    <property type="protein sequence ID" value="AAH27170.1"/>
    <property type="status" value="ALT_SEQ"/>
    <property type="molecule type" value="mRNA"/>
</dbReference>
<dbReference type="EMBL" id="BG175340">
    <property type="status" value="NOT_ANNOTATED_CDS"/>
    <property type="molecule type" value="mRNA"/>
</dbReference>
<dbReference type="EMBL" id="BB620602">
    <property type="status" value="NOT_ANNOTATED_CDS"/>
    <property type="molecule type" value="mRNA"/>
</dbReference>
<dbReference type="CCDS" id="CCDS57308.1"/>
<dbReference type="RefSeq" id="NP_001192102.1">
    <property type="nucleotide sequence ID" value="NM_001205173.2"/>
</dbReference>
<dbReference type="RefSeq" id="NP_898971.1">
    <property type="nucleotide sequence ID" value="NM_183148.3"/>
</dbReference>
<dbReference type="SMR" id="Q8R2V2"/>
<dbReference type="BioGRID" id="229345">
    <property type="interactions" value="2"/>
</dbReference>
<dbReference type="FunCoup" id="Q8R2V2">
    <property type="interactions" value="38"/>
</dbReference>
<dbReference type="IntAct" id="Q8R2V2">
    <property type="interactions" value="7"/>
</dbReference>
<dbReference type="STRING" id="10090.ENSMUSP00000134062"/>
<dbReference type="iPTMnet" id="Q8R2V2"/>
<dbReference type="PhosphoSitePlus" id="Q8R2V2"/>
<dbReference type="PaxDb" id="10090-ENSMUSP00000134062"/>
<dbReference type="ProteomicsDB" id="267104"/>
<dbReference type="Ensembl" id="ENSMUST00000174078.2">
    <property type="protein sequence ID" value="ENSMUSP00000134062.2"/>
    <property type="gene ID" value="ENSMUSG00000041025.16"/>
</dbReference>
<dbReference type="GeneID" id="212632"/>
<dbReference type="KEGG" id="mmu:212632"/>
<dbReference type="UCSC" id="uc008vmn.2">
    <property type="organism name" value="mouse"/>
</dbReference>
<dbReference type="AGR" id="MGI:2140675"/>
<dbReference type="CTD" id="126917"/>
<dbReference type="MGI" id="MGI:2140675">
    <property type="gene designation" value="Iffo2"/>
</dbReference>
<dbReference type="VEuPathDB" id="HostDB:ENSMUSG00000041025"/>
<dbReference type="eggNOG" id="ENOG502QW7N">
    <property type="taxonomic scope" value="Eukaryota"/>
</dbReference>
<dbReference type="GeneTree" id="ENSGT00510000046803"/>
<dbReference type="HOGENOM" id="CLU_039629_2_1_1"/>
<dbReference type="InParanoid" id="Q8R2V2"/>
<dbReference type="OMA" id="RSQYVNM"/>
<dbReference type="OrthoDB" id="9946830at2759"/>
<dbReference type="PhylomeDB" id="Q8R2V2"/>
<dbReference type="TreeFam" id="TF331217"/>
<dbReference type="BioGRID-ORCS" id="212632">
    <property type="hits" value="0 hits in 77 CRISPR screens"/>
</dbReference>
<dbReference type="ChiTaRS" id="Iffo2">
    <property type="organism name" value="mouse"/>
</dbReference>
<dbReference type="PRO" id="PR:Q8R2V2"/>
<dbReference type="Proteomes" id="UP000000589">
    <property type="component" value="Chromosome 4"/>
</dbReference>
<dbReference type="RNAct" id="Q8R2V2">
    <property type="molecule type" value="protein"/>
</dbReference>
<dbReference type="Bgee" id="ENSMUSG00000041025">
    <property type="expression patterns" value="Expressed in tail skin and 166 other cell types or tissues"/>
</dbReference>
<dbReference type="ExpressionAtlas" id="Q8R2V2">
    <property type="expression patterns" value="baseline and differential"/>
</dbReference>
<dbReference type="GO" id="GO:0005882">
    <property type="term" value="C:intermediate filament"/>
    <property type="evidence" value="ECO:0007669"/>
    <property type="project" value="UniProtKB-KW"/>
</dbReference>
<dbReference type="Gene3D" id="1.20.5.170">
    <property type="match status" value="1"/>
</dbReference>
<dbReference type="Gene3D" id="1.20.5.1160">
    <property type="entry name" value="Vasodilator-stimulated phosphoprotein"/>
    <property type="match status" value="1"/>
</dbReference>
<dbReference type="InterPro" id="IPR039008">
    <property type="entry name" value="IF_rod_dom"/>
</dbReference>
<dbReference type="PANTHER" id="PTHR14516">
    <property type="entry name" value="1-PYRROLINE-5-CARBOXYLATE DEHYDROGENASE FAMILY MEMBER"/>
    <property type="match status" value="1"/>
</dbReference>
<dbReference type="PANTHER" id="PTHR14516:SF1">
    <property type="entry name" value="INTERMEDIATE FILAMENT FAMILY ORPHAN 2"/>
    <property type="match status" value="1"/>
</dbReference>
<dbReference type="Pfam" id="PF00038">
    <property type="entry name" value="Filament"/>
    <property type="match status" value="1"/>
</dbReference>
<dbReference type="SMART" id="SM01391">
    <property type="entry name" value="Filament"/>
    <property type="match status" value="1"/>
</dbReference>
<dbReference type="SUPFAM" id="SSF64593">
    <property type="entry name" value="Intermediate filament protein, coiled coil region"/>
    <property type="match status" value="1"/>
</dbReference>
<dbReference type="PROSITE" id="PS51842">
    <property type="entry name" value="IF_ROD_2"/>
    <property type="match status" value="1"/>
</dbReference>
<reference key="1">
    <citation type="journal article" date="2004" name="Genome Res.">
        <title>The status, quality, and expansion of the NIH full-length cDNA project: the Mammalian Gene Collection (MGC).</title>
        <authorList>
            <consortium name="The MGC Project Team"/>
        </authorList>
    </citation>
    <scope>NUCLEOTIDE SEQUENCE [LARGE SCALE MRNA]</scope>
    <source>
        <strain>FVB/N</strain>
        <tissue>Mammary tumor</tissue>
    </source>
</reference>
<reference key="2">
    <citation type="journal article" date="2005" name="Science">
        <title>The transcriptional landscape of the mammalian genome.</title>
        <authorList>
            <person name="Carninci P."/>
            <person name="Kasukawa T."/>
            <person name="Katayama S."/>
            <person name="Gough J."/>
            <person name="Frith M.C."/>
            <person name="Maeda N."/>
            <person name="Oyama R."/>
            <person name="Ravasi T."/>
            <person name="Lenhard B."/>
            <person name="Wells C."/>
            <person name="Kodzius R."/>
            <person name="Shimokawa K."/>
            <person name="Bajic V.B."/>
            <person name="Brenner S.E."/>
            <person name="Batalov S."/>
            <person name="Forrest A.R."/>
            <person name="Zavolan M."/>
            <person name="Davis M.J."/>
            <person name="Wilming L.G."/>
            <person name="Aidinis V."/>
            <person name="Allen J.E."/>
            <person name="Ambesi-Impiombato A."/>
            <person name="Apweiler R."/>
            <person name="Aturaliya R.N."/>
            <person name="Bailey T.L."/>
            <person name="Bansal M."/>
            <person name="Baxter L."/>
            <person name="Beisel K.W."/>
            <person name="Bersano T."/>
            <person name="Bono H."/>
            <person name="Chalk A.M."/>
            <person name="Chiu K.P."/>
            <person name="Choudhary V."/>
            <person name="Christoffels A."/>
            <person name="Clutterbuck D.R."/>
            <person name="Crowe M.L."/>
            <person name="Dalla E."/>
            <person name="Dalrymple B.P."/>
            <person name="de Bono B."/>
            <person name="Della Gatta G."/>
            <person name="di Bernardo D."/>
            <person name="Down T."/>
            <person name="Engstrom P."/>
            <person name="Fagiolini M."/>
            <person name="Faulkner G."/>
            <person name="Fletcher C.F."/>
            <person name="Fukushima T."/>
            <person name="Furuno M."/>
            <person name="Futaki S."/>
            <person name="Gariboldi M."/>
            <person name="Georgii-Hemming P."/>
            <person name="Gingeras T.R."/>
            <person name="Gojobori T."/>
            <person name="Green R.E."/>
            <person name="Gustincich S."/>
            <person name="Harbers M."/>
            <person name="Hayashi Y."/>
            <person name="Hensch T.K."/>
            <person name="Hirokawa N."/>
            <person name="Hill D."/>
            <person name="Huminiecki L."/>
            <person name="Iacono M."/>
            <person name="Ikeo K."/>
            <person name="Iwama A."/>
            <person name="Ishikawa T."/>
            <person name="Jakt M."/>
            <person name="Kanapin A."/>
            <person name="Katoh M."/>
            <person name="Kawasawa Y."/>
            <person name="Kelso J."/>
            <person name="Kitamura H."/>
            <person name="Kitano H."/>
            <person name="Kollias G."/>
            <person name="Krishnan S.P."/>
            <person name="Kruger A."/>
            <person name="Kummerfeld S.K."/>
            <person name="Kurochkin I.V."/>
            <person name="Lareau L.F."/>
            <person name="Lazarevic D."/>
            <person name="Lipovich L."/>
            <person name="Liu J."/>
            <person name="Liuni S."/>
            <person name="McWilliam S."/>
            <person name="Madan Babu M."/>
            <person name="Madera M."/>
            <person name="Marchionni L."/>
            <person name="Matsuda H."/>
            <person name="Matsuzawa S."/>
            <person name="Miki H."/>
            <person name="Mignone F."/>
            <person name="Miyake S."/>
            <person name="Morris K."/>
            <person name="Mottagui-Tabar S."/>
            <person name="Mulder N."/>
            <person name="Nakano N."/>
            <person name="Nakauchi H."/>
            <person name="Ng P."/>
            <person name="Nilsson R."/>
            <person name="Nishiguchi S."/>
            <person name="Nishikawa S."/>
            <person name="Nori F."/>
            <person name="Ohara O."/>
            <person name="Okazaki Y."/>
            <person name="Orlando V."/>
            <person name="Pang K.C."/>
            <person name="Pavan W.J."/>
            <person name="Pavesi G."/>
            <person name="Pesole G."/>
            <person name="Petrovsky N."/>
            <person name="Piazza S."/>
            <person name="Reed J."/>
            <person name="Reid J.F."/>
            <person name="Ring B.Z."/>
            <person name="Ringwald M."/>
            <person name="Rost B."/>
            <person name="Ruan Y."/>
            <person name="Salzberg S.L."/>
            <person name="Sandelin A."/>
            <person name="Schneider C."/>
            <person name="Schoenbach C."/>
            <person name="Sekiguchi K."/>
            <person name="Semple C.A."/>
            <person name="Seno S."/>
            <person name="Sessa L."/>
            <person name="Sheng Y."/>
            <person name="Shibata Y."/>
            <person name="Shimada H."/>
            <person name="Shimada K."/>
            <person name="Silva D."/>
            <person name="Sinclair B."/>
            <person name="Sperling S."/>
            <person name="Stupka E."/>
            <person name="Sugiura K."/>
            <person name="Sultana R."/>
            <person name="Takenaka Y."/>
            <person name="Taki K."/>
            <person name="Tammoja K."/>
            <person name="Tan S.L."/>
            <person name="Tang S."/>
            <person name="Taylor M.S."/>
            <person name="Tegner J."/>
            <person name="Teichmann S.A."/>
            <person name="Ueda H.R."/>
            <person name="van Nimwegen E."/>
            <person name="Verardo R."/>
            <person name="Wei C.L."/>
            <person name="Yagi K."/>
            <person name="Yamanishi H."/>
            <person name="Zabarovsky E."/>
            <person name="Zhu S."/>
            <person name="Zimmer A."/>
            <person name="Hide W."/>
            <person name="Bult C."/>
            <person name="Grimmond S.M."/>
            <person name="Teasdale R.D."/>
            <person name="Liu E.T."/>
            <person name="Brusic V."/>
            <person name="Quackenbush J."/>
            <person name="Wahlestedt C."/>
            <person name="Mattick J.S."/>
            <person name="Hume D.A."/>
            <person name="Kai C."/>
            <person name="Sasaki D."/>
            <person name="Tomaru Y."/>
            <person name="Fukuda S."/>
            <person name="Kanamori-Katayama M."/>
            <person name="Suzuki M."/>
            <person name="Aoki J."/>
            <person name="Arakawa T."/>
            <person name="Iida J."/>
            <person name="Imamura K."/>
            <person name="Itoh M."/>
            <person name="Kato T."/>
            <person name="Kawaji H."/>
            <person name="Kawagashira N."/>
            <person name="Kawashima T."/>
            <person name="Kojima M."/>
            <person name="Kondo S."/>
            <person name="Konno H."/>
            <person name="Nakano K."/>
            <person name="Ninomiya N."/>
            <person name="Nishio T."/>
            <person name="Okada M."/>
            <person name="Plessy C."/>
            <person name="Shibata K."/>
            <person name="Shiraki T."/>
            <person name="Suzuki S."/>
            <person name="Tagami M."/>
            <person name="Waki K."/>
            <person name="Watahiki A."/>
            <person name="Okamura-Oho Y."/>
            <person name="Suzuki H."/>
            <person name="Kawai J."/>
            <person name="Hayashizaki Y."/>
        </authorList>
    </citation>
    <scope>NUCLEOTIDE SEQUENCE [LARGE SCALE MRNA] OF 1-143</scope>
</reference>
<name>IFFO2_MOUSE</name>
<sequence>MVNSLLFGEMALAFGCPPGGGGCAGGGGGGGAGPGPSPVTAALRDDLGSNIHLLKGLNVRFRCFLAKVHELERRNRLLEKQLEQQQSERDRRLRYKTFSREQAVQTGPELLRPSAAGSGQALGAATGVNANAVALGGLPPGGGSHPQHYGRLPGTIWSYTQVRRTGGGGVETVQGPGVSWVHPDGVGVQIDTITPEIRALYNVLAKVKRERDEYKRRWEEELAKRMNLQTMVDTLQEAAQEAEAIQEEMNEKIERLKAELVVFKGLMSDPMTDLDTKIQEKAMKVDMDICRRIDITAKLCDVAQQRNSEDVSKIFQVVPKKKDRKVASDEDISEQDGEVNRFSDEEVGSMNITDEMKRMFNQLRETFDFDDDCDSLTWEENEDTLLLWEDFTNCNPTIDLQGEQEENLGNLIHETESFFKTRDKEYQETIGQIELELATAKSDMNRHLHEYMEMCSMKRGLDVQMETCRRLIKGSADRNSPSPSSVASSDSGSTDEIQEDLEREADVEPMVS</sequence>
<proteinExistence type="evidence at transcript level"/>